<proteinExistence type="inferred from homology"/>
<accession>Q4G358</accession>
<name>RK16_EMIHU</name>
<protein>
    <recommendedName>
        <fullName evidence="1">Large ribosomal subunit protein uL16c</fullName>
    </recommendedName>
    <alternativeName>
        <fullName evidence="2">50S ribosomal protein L16, chloroplastic</fullName>
    </alternativeName>
</protein>
<organism>
    <name type="scientific">Emiliania huxleyi</name>
    <name type="common">Coccolithophore</name>
    <name type="synonym">Pontosphaera huxleyi</name>
    <dbReference type="NCBI Taxonomy" id="2903"/>
    <lineage>
        <taxon>Eukaryota</taxon>
        <taxon>Haptista</taxon>
        <taxon>Haptophyta</taxon>
        <taxon>Prymnesiophyceae</taxon>
        <taxon>Isochrysidales</taxon>
        <taxon>Noelaerhabdaceae</taxon>
        <taxon>Emiliania</taxon>
    </lineage>
</organism>
<reference key="1">
    <citation type="journal article" date="2005" name="DNA Res.">
        <title>The complete plastid genome sequence of the haptophyte Emiliania huxleyi: a comparison to other plastid genomes.</title>
        <authorList>
            <person name="Sanchez-Puerta M.V."/>
            <person name="Bachvaroff T.R."/>
            <person name="Delwiche C.F."/>
        </authorList>
    </citation>
    <scope>NUCLEOTIDE SEQUENCE [LARGE SCALE GENOMIC DNA]</scope>
    <source>
        <strain>CCMP373 / CSIRO-CS-57 / BT6</strain>
    </source>
</reference>
<gene>
    <name evidence="1" type="primary">rpl16</name>
</gene>
<evidence type="ECO:0000255" key="1">
    <source>
        <dbReference type="HAMAP-Rule" id="MF_01342"/>
    </source>
</evidence>
<evidence type="ECO:0000305" key="2"/>
<dbReference type="EMBL" id="AY741371">
    <property type="protein sequence ID" value="AAX13908.1"/>
    <property type="molecule type" value="Genomic_DNA"/>
</dbReference>
<dbReference type="RefSeq" id="YP_277409.1">
    <property type="nucleotide sequence ID" value="NC_007288.1"/>
</dbReference>
<dbReference type="SMR" id="Q4G358"/>
<dbReference type="STRING" id="2903.Q4G358"/>
<dbReference type="GeneID" id="3562493"/>
<dbReference type="GO" id="GO:0009507">
    <property type="term" value="C:chloroplast"/>
    <property type="evidence" value="ECO:0007669"/>
    <property type="project" value="UniProtKB-SubCell"/>
</dbReference>
<dbReference type="GO" id="GO:0005762">
    <property type="term" value="C:mitochondrial large ribosomal subunit"/>
    <property type="evidence" value="ECO:0007669"/>
    <property type="project" value="TreeGrafter"/>
</dbReference>
<dbReference type="GO" id="GO:0019843">
    <property type="term" value="F:rRNA binding"/>
    <property type="evidence" value="ECO:0007669"/>
    <property type="project" value="InterPro"/>
</dbReference>
<dbReference type="GO" id="GO:0003735">
    <property type="term" value="F:structural constituent of ribosome"/>
    <property type="evidence" value="ECO:0007669"/>
    <property type="project" value="InterPro"/>
</dbReference>
<dbReference type="GO" id="GO:0032543">
    <property type="term" value="P:mitochondrial translation"/>
    <property type="evidence" value="ECO:0007669"/>
    <property type="project" value="TreeGrafter"/>
</dbReference>
<dbReference type="CDD" id="cd01433">
    <property type="entry name" value="Ribosomal_L16_L10e"/>
    <property type="match status" value="1"/>
</dbReference>
<dbReference type="FunFam" id="3.90.1170.10:FF:000001">
    <property type="entry name" value="50S ribosomal protein L16"/>
    <property type="match status" value="1"/>
</dbReference>
<dbReference type="Gene3D" id="3.90.1170.10">
    <property type="entry name" value="Ribosomal protein L10e/L16"/>
    <property type="match status" value="1"/>
</dbReference>
<dbReference type="HAMAP" id="MF_01342">
    <property type="entry name" value="Ribosomal_uL16"/>
    <property type="match status" value="1"/>
</dbReference>
<dbReference type="InterPro" id="IPR047873">
    <property type="entry name" value="Ribosomal_uL16"/>
</dbReference>
<dbReference type="InterPro" id="IPR000114">
    <property type="entry name" value="Ribosomal_uL16_bact-type"/>
</dbReference>
<dbReference type="InterPro" id="IPR020798">
    <property type="entry name" value="Ribosomal_uL16_CS"/>
</dbReference>
<dbReference type="InterPro" id="IPR016180">
    <property type="entry name" value="Ribosomal_uL16_dom"/>
</dbReference>
<dbReference type="InterPro" id="IPR036920">
    <property type="entry name" value="Ribosomal_uL16_sf"/>
</dbReference>
<dbReference type="NCBIfam" id="TIGR01164">
    <property type="entry name" value="rplP_bact"/>
    <property type="match status" value="1"/>
</dbReference>
<dbReference type="PANTHER" id="PTHR12220">
    <property type="entry name" value="50S/60S RIBOSOMAL PROTEIN L16"/>
    <property type="match status" value="1"/>
</dbReference>
<dbReference type="PANTHER" id="PTHR12220:SF13">
    <property type="entry name" value="LARGE RIBOSOMAL SUBUNIT PROTEIN UL16M"/>
    <property type="match status" value="1"/>
</dbReference>
<dbReference type="Pfam" id="PF00252">
    <property type="entry name" value="Ribosomal_L16"/>
    <property type="match status" value="1"/>
</dbReference>
<dbReference type="PRINTS" id="PR00060">
    <property type="entry name" value="RIBOSOMALL16"/>
</dbReference>
<dbReference type="SUPFAM" id="SSF54686">
    <property type="entry name" value="Ribosomal protein L16p/L10e"/>
    <property type="match status" value="1"/>
</dbReference>
<dbReference type="PROSITE" id="PS00586">
    <property type="entry name" value="RIBOSOMAL_L16_1"/>
    <property type="match status" value="1"/>
</dbReference>
<dbReference type="PROSITE" id="PS00701">
    <property type="entry name" value="RIBOSOMAL_L16_2"/>
    <property type="match status" value="1"/>
</dbReference>
<feature type="chain" id="PRO_0000062279" description="Large ribosomal subunit protein uL16c">
    <location>
        <begin position="1"/>
        <end position="138"/>
    </location>
</feature>
<keyword id="KW-0150">Chloroplast</keyword>
<keyword id="KW-0934">Plastid</keyword>
<keyword id="KW-0687">Ribonucleoprotein</keyword>
<keyword id="KW-0689">Ribosomal protein</keyword>
<geneLocation type="chloroplast"/>
<sequence length="138" mass="15632">MLLPKRTKFRKMHRGRLKGVATRANTVVFGEFGIQALEPVWLTSRQIEATRRSITRYVRRTGKIWIRVFPDRSVTERAAESRMGAGKGAVSYWVAVVKPGTVLFEINGLSEEMSHQVLKSASYKLPIKTKIISRESGN</sequence>
<comment type="subunit">
    <text evidence="1">Part of the 50S ribosomal subunit.</text>
</comment>
<comment type="subcellular location">
    <subcellularLocation>
        <location>Plastid</location>
        <location>Chloroplast</location>
    </subcellularLocation>
</comment>
<comment type="similarity">
    <text evidence="1">Belongs to the universal ribosomal protein uL16 family.</text>
</comment>